<sequence length="395" mass="44732">MGIKHLYQLIEEHTPEAVKKGEIKNQFGRKVAIDASMSIYSFLIAVRSDGQQLMSETGETTSHLMGLFYRTMRMVDNGIKPLYVFDGAPPKLKSGELAKRFQRKTEAHAAAEEAKETGTAEDVEKFSRRTVRVTREHNEECQRLLKLMGIPYIVAPTEAEAQCAALARGGKVYAAASEDMDTLTFDTPILLRHLTFSEQRKEPILEIHLDKVLEGLQMERKQFIDLCILLGCDYLDPIKGIGPSTALKLIREHNDLEGVVEHIKSQSSKKLTIPDDWPFADARLLFLEPDVRPADDPECDFKWEAPDVEGLVKFLVEEKHFNEDRVRNGAAKLQKNMKTAQQSRLEGFFKPIEKTAEQKATLKRKADEKLEEKKKKQKVDAKAKKQAKAKPRTAG</sequence>
<gene>
    <name type="primary">fen1</name>
    <name type="ORF">PTRG_01978</name>
</gene>
<keyword id="KW-0227">DNA damage</keyword>
<keyword id="KW-0234">DNA repair</keyword>
<keyword id="KW-0235">DNA replication</keyword>
<keyword id="KW-0255">Endonuclease</keyword>
<keyword id="KW-0269">Exonuclease</keyword>
<keyword id="KW-0378">Hydrolase</keyword>
<keyword id="KW-0460">Magnesium</keyword>
<keyword id="KW-0479">Metal-binding</keyword>
<keyword id="KW-0496">Mitochondrion</keyword>
<keyword id="KW-0540">Nuclease</keyword>
<keyword id="KW-0539">Nucleus</keyword>
<keyword id="KW-0597">Phosphoprotein</keyword>
<keyword id="KW-1185">Reference proteome</keyword>
<proteinExistence type="inferred from homology"/>
<comment type="function">
    <text evidence="1">Structure-specific nuclease with 5'-flap endonuclease and 5'-3' exonuclease activities involved in DNA replication and repair. During DNA replication, cleaves the 5'-overhanging flap structure that is generated by displacement synthesis when DNA polymerase encounters the 5'-end of a downstream Okazaki fragment. It enters the flap from the 5'-end and then tracks to cleave the flap base, leaving a nick for ligation. Also involved in the long patch base excision repair (LP-BER) pathway, by cleaving within the apurinic/apyrimidinic (AP) site-terminated flap. Acts as a genome stabilization factor that prevents flaps from equilibrating into structures that lead to duplications and deletions. Also possesses 5'-3' exonuclease activity on nicked or gapped double-stranded DNA, and exhibits RNase H activity. Also involved in replication and repair of rDNA and in repairing mitochondrial DNA.</text>
</comment>
<comment type="cofactor">
    <cofactor evidence="1">
        <name>Mg(2+)</name>
        <dbReference type="ChEBI" id="CHEBI:18420"/>
    </cofactor>
    <text evidence="1">Binds 2 magnesium ions per subunit. They probably participate in the reaction catalyzed by the enzyme. May bind an additional third magnesium ion after substrate binding.</text>
</comment>
<comment type="subunit">
    <text evidence="1">Interacts with PCNA. Three molecules of fen1 bind to one PCNA trimer with each molecule binding to one PCNA monomer. PCNA stimulates the nuclease activity without altering cleavage specificity.</text>
</comment>
<comment type="subcellular location">
    <subcellularLocation>
        <location evidence="1">Nucleus</location>
        <location evidence="1">Nucleolus</location>
    </subcellularLocation>
    <subcellularLocation>
        <location evidence="1">Nucleus</location>
        <location evidence="1">Nucleoplasm</location>
    </subcellularLocation>
    <subcellularLocation>
        <location evidence="1">Mitochondrion</location>
    </subcellularLocation>
    <text evidence="1">Resides mostly in the nucleoli and relocalizes to the nucleoplasm upon DNA damage.</text>
</comment>
<comment type="PTM">
    <text evidence="1">Phosphorylated. Phosphorylation upon DNA damage induces relocalization to the nuclear plasma.</text>
</comment>
<comment type="similarity">
    <text evidence="1">Belongs to the XPG/RAD2 endonuclease family. FEN1 subfamily.</text>
</comment>
<comment type="sequence caution" evidence="3">
    <conflict type="erroneous gene model prediction">
        <sequence resource="EMBL-CDS" id="EDU41416"/>
    </conflict>
</comment>
<reference key="1">
    <citation type="journal article" date="2013" name="G3 (Bethesda)">
        <title>Comparative genomics of a plant-pathogenic fungus, Pyrenophora tritici-repentis, reveals transduplication and the impact of repeat elements on pathogenicity and population divergence.</title>
        <authorList>
            <person name="Manning V.A."/>
            <person name="Pandelova I."/>
            <person name="Dhillon B."/>
            <person name="Wilhelm L.J."/>
            <person name="Goodwin S.B."/>
            <person name="Berlin A.M."/>
            <person name="Figueroa M."/>
            <person name="Freitag M."/>
            <person name="Hane J.K."/>
            <person name="Henrissat B."/>
            <person name="Holman W.H."/>
            <person name="Kodira C.D."/>
            <person name="Martin J."/>
            <person name="Oliver R.P."/>
            <person name="Robbertse B."/>
            <person name="Schackwitz W."/>
            <person name="Schwartz D.C."/>
            <person name="Spatafora J.W."/>
            <person name="Turgeon B.G."/>
            <person name="Yandava C."/>
            <person name="Young S."/>
            <person name="Zhou S."/>
            <person name="Zeng Q."/>
            <person name="Grigoriev I.V."/>
            <person name="Ma L.-J."/>
            <person name="Ciuffetti L.M."/>
        </authorList>
    </citation>
    <scope>NUCLEOTIDE SEQUENCE [LARGE SCALE GENOMIC DNA]</scope>
    <source>
        <strain>Pt-1C-BFP</strain>
    </source>
</reference>
<protein>
    <recommendedName>
        <fullName evidence="1">Flap endonuclease 1</fullName>
        <shortName evidence="1">FEN-1</shortName>
        <ecNumber evidence="1">3.1.-.-</ecNumber>
    </recommendedName>
    <alternativeName>
        <fullName evidence="1">Flap structure-specific endonuclease 1</fullName>
    </alternativeName>
</protein>
<dbReference type="EC" id="3.1.-.-" evidence="1"/>
<dbReference type="EMBL" id="DS231615">
    <property type="protein sequence ID" value="EDU41416.1"/>
    <property type="status" value="ALT_SEQ"/>
    <property type="molecule type" value="Genomic_DNA"/>
</dbReference>
<dbReference type="RefSeq" id="XP_001932311.1">
    <property type="nucleotide sequence ID" value="XM_001932276.1"/>
</dbReference>
<dbReference type="SMR" id="B2VTT3"/>
<dbReference type="FunCoup" id="B2VTT3">
    <property type="interactions" value="1023"/>
</dbReference>
<dbReference type="STRING" id="426418.B2VTT3"/>
<dbReference type="eggNOG" id="KOG2519">
    <property type="taxonomic scope" value="Eukaryota"/>
</dbReference>
<dbReference type="InParanoid" id="B2VTT3"/>
<dbReference type="OrthoDB" id="24311at28556"/>
<dbReference type="Proteomes" id="UP000001471">
    <property type="component" value="Unassembled WGS sequence"/>
</dbReference>
<dbReference type="GO" id="GO:0005739">
    <property type="term" value="C:mitochondrion"/>
    <property type="evidence" value="ECO:0007669"/>
    <property type="project" value="UniProtKB-SubCell"/>
</dbReference>
<dbReference type="GO" id="GO:0005730">
    <property type="term" value="C:nucleolus"/>
    <property type="evidence" value="ECO:0007669"/>
    <property type="project" value="UniProtKB-SubCell"/>
</dbReference>
<dbReference type="GO" id="GO:0005654">
    <property type="term" value="C:nucleoplasm"/>
    <property type="evidence" value="ECO:0007669"/>
    <property type="project" value="UniProtKB-SubCell"/>
</dbReference>
<dbReference type="GO" id="GO:0008409">
    <property type="term" value="F:5'-3' exonuclease activity"/>
    <property type="evidence" value="ECO:0007669"/>
    <property type="project" value="UniProtKB-UniRule"/>
</dbReference>
<dbReference type="GO" id="GO:0017108">
    <property type="term" value="F:5'-flap endonuclease activity"/>
    <property type="evidence" value="ECO:0007669"/>
    <property type="project" value="UniProtKB-UniRule"/>
</dbReference>
<dbReference type="GO" id="GO:0003677">
    <property type="term" value="F:DNA binding"/>
    <property type="evidence" value="ECO:0007669"/>
    <property type="project" value="UniProtKB-UniRule"/>
</dbReference>
<dbReference type="GO" id="GO:0000287">
    <property type="term" value="F:magnesium ion binding"/>
    <property type="evidence" value="ECO:0007669"/>
    <property type="project" value="UniProtKB-UniRule"/>
</dbReference>
<dbReference type="GO" id="GO:0006284">
    <property type="term" value="P:base-excision repair"/>
    <property type="evidence" value="ECO:0007669"/>
    <property type="project" value="UniProtKB-UniRule"/>
</dbReference>
<dbReference type="GO" id="GO:0043137">
    <property type="term" value="P:DNA replication, removal of RNA primer"/>
    <property type="evidence" value="ECO:0007669"/>
    <property type="project" value="UniProtKB-UniRule"/>
</dbReference>
<dbReference type="CDD" id="cd09907">
    <property type="entry name" value="H3TH_FEN1-Euk"/>
    <property type="match status" value="1"/>
</dbReference>
<dbReference type="CDD" id="cd09867">
    <property type="entry name" value="PIN_FEN1"/>
    <property type="match status" value="1"/>
</dbReference>
<dbReference type="FunFam" id="1.10.150.20:FF:000009">
    <property type="entry name" value="Flap endonuclease 1"/>
    <property type="match status" value="1"/>
</dbReference>
<dbReference type="FunFam" id="3.40.50.1010:FF:000003">
    <property type="entry name" value="Flap endonuclease 1"/>
    <property type="match status" value="1"/>
</dbReference>
<dbReference type="Gene3D" id="1.10.150.20">
    <property type="entry name" value="5' to 3' exonuclease, C-terminal subdomain"/>
    <property type="match status" value="1"/>
</dbReference>
<dbReference type="Gene3D" id="3.40.50.1010">
    <property type="entry name" value="5'-nuclease"/>
    <property type="match status" value="1"/>
</dbReference>
<dbReference type="HAMAP" id="MF_00614">
    <property type="entry name" value="Fen"/>
    <property type="match status" value="1"/>
</dbReference>
<dbReference type="InterPro" id="IPR036279">
    <property type="entry name" value="5-3_exonuclease_C_sf"/>
</dbReference>
<dbReference type="InterPro" id="IPR023426">
    <property type="entry name" value="Flap_endonuc"/>
</dbReference>
<dbReference type="InterPro" id="IPR008918">
    <property type="entry name" value="HhH2"/>
</dbReference>
<dbReference type="InterPro" id="IPR029060">
    <property type="entry name" value="PIN-like_dom_sf"/>
</dbReference>
<dbReference type="InterPro" id="IPR006086">
    <property type="entry name" value="XPG-I_dom"/>
</dbReference>
<dbReference type="InterPro" id="IPR006084">
    <property type="entry name" value="XPG/Rad2"/>
</dbReference>
<dbReference type="InterPro" id="IPR019974">
    <property type="entry name" value="XPG_CS"/>
</dbReference>
<dbReference type="InterPro" id="IPR006085">
    <property type="entry name" value="XPG_DNA_repair_N"/>
</dbReference>
<dbReference type="PANTHER" id="PTHR11081:SF9">
    <property type="entry name" value="FLAP ENDONUCLEASE 1"/>
    <property type="match status" value="1"/>
</dbReference>
<dbReference type="PANTHER" id="PTHR11081">
    <property type="entry name" value="FLAP ENDONUCLEASE FAMILY MEMBER"/>
    <property type="match status" value="1"/>
</dbReference>
<dbReference type="Pfam" id="PF00867">
    <property type="entry name" value="XPG_I"/>
    <property type="match status" value="1"/>
</dbReference>
<dbReference type="Pfam" id="PF00752">
    <property type="entry name" value="XPG_N"/>
    <property type="match status" value="1"/>
</dbReference>
<dbReference type="PRINTS" id="PR00853">
    <property type="entry name" value="XPGRADSUPER"/>
</dbReference>
<dbReference type="SMART" id="SM00279">
    <property type="entry name" value="HhH2"/>
    <property type="match status" value="1"/>
</dbReference>
<dbReference type="SMART" id="SM00484">
    <property type="entry name" value="XPGI"/>
    <property type="match status" value="1"/>
</dbReference>
<dbReference type="SMART" id="SM00485">
    <property type="entry name" value="XPGN"/>
    <property type="match status" value="1"/>
</dbReference>
<dbReference type="SUPFAM" id="SSF47807">
    <property type="entry name" value="5' to 3' exonuclease, C-terminal subdomain"/>
    <property type="match status" value="1"/>
</dbReference>
<dbReference type="SUPFAM" id="SSF88723">
    <property type="entry name" value="PIN domain-like"/>
    <property type="match status" value="1"/>
</dbReference>
<dbReference type="PROSITE" id="PS00841">
    <property type="entry name" value="XPG_1"/>
    <property type="match status" value="1"/>
</dbReference>
<dbReference type="PROSITE" id="PS00842">
    <property type="entry name" value="XPG_2"/>
    <property type="match status" value="1"/>
</dbReference>
<accession>B2VTT3</accession>
<organism>
    <name type="scientific">Pyrenophora tritici-repentis (strain Pt-1C-BFP)</name>
    <name type="common">Wheat tan spot fungus</name>
    <name type="synonym">Drechslera tritici-repentis</name>
    <dbReference type="NCBI Taxonomy" id="426418"/>
    <lineage>
        <taxon>Eukaryota</taxon>
        <taxon>Fungi</taxon>
        <taxon>Dikarya</taxon>
        <taxon>Ascomycota</taxon>
        <taxon>Pezizomycotina</taxon>
        <taxon>Dothideomycetes</taxon>
        <taxon>Pleosporomycetidae</taxon>
        <taxon>Pleosporales</taxon>
        <taxon>Pleosporineae</taxon>
        <taxon>Pleosporaceae</taxon>
        <taxon>Pyrenophora</taxon>
    </lineage>
</organism>
<evidence type="ECO:0000255" key="1">
    <source>
        <dbReference type="HAMAP-Rule" id="MF_03140"/>
    </source>
</evidence>
<evidence type="ECO:0000256" key="2">
    <source>
        <dbReference type="SAM" id="MobiDB-lite"/>
    </source>
</evidence>
<evidence type="ECO:0000305" key="3"/>
<name>FEN1_PYRTR</name>
<feature type="chain" id="PRO_0000403595" description="Flap endonuclease 1">
    <location>
        <begin position="1"/>
        <end position="395"/>
    </location>
</feature>
<feature type="region of interest" description="N-domain">
    <location>
        <begin position="1"/>
        <end position="104"/>
    </location>
</feature>
<feature type="region of interest" description="I-domain">
    <location>
        <begin position="122"/>
        <end position="253"/>
    </location>
</feature>
<feature type="region of interest" description="Interaction with PCNA" evidence="1">
    <location>
        <begin position="341"/>
        <end position="349"/>
    </location>
</feature>
<feature type="region of interest" description="Disordered" evidence="2">
    <location>
        <begin position="359"/>
        <end position="395"/>
    </location>
</feature>
<feature type="compositionally biased region" description="Basic and acidic residues" evidence="2">
    <location>
        <begin position="364"/>
        <end position="383"/>
    </location>
</feature>
<feature type="compositionally biased region" description="Basic residues" evidence="2">
    <location>
        <begin position="384"/>
        <end position="395"/>
    </location>
</feature>
<feature type="binding site" evidence="1">
    <location>
        <position position="34"/>
    </location>
    <ligand>
        <name>Mg(2+)</name>
        <dbReference type="ChEBI" id="CHEBI:18420"/>
        <label>1</label>
    </ligand>
</feature>
<feature type="binding site" evidence="1">
    <location>
        <position position="47"/>
    </location>
    <ligand>
        <name>DNA</name>
        <dbReference type="ChEBI" id="CHEBI:16991"/>
    </ligand>
</feature>
<feature type="binding site" evidence="1">
    <location>
        <position position="70"/>
    </location>
    <ligand>
        <name>DNA</name>
        <dbReference type="ChEBI" id="CHEBI:16991"/>
    </ligand>
</feature>
<feature type="binding site" evidence="1">
    <location>
        <position position="86"/>
    </location>
    <ligand>
        <name>Mg(2+)</name>
        <dbReference type="ChEBI" id="CHEBI:18420"/>
        <label>1</label>
    </ligand>
</feature>
<feature type="binding site" evidence="1">
    <location>
        <position position="158"/>
    </location>
    <ligand>
        <name>DNA</name>
        <dbReference type="ChEBI" id="CHEBI:16991"/>
    </ligand>
</feature>
<feature type="binding site" evidence="1">
    <location>
        <position position="158"/>
    </location>
    <ligand>
        <name>Mg(2+)</name>
        <dbReference type="ChEBI" id="CHEBI:18420"/>
        <label>1</label>
    </ligand>
</feature>
<feature type="binding site" evidence="1">
    <location>
        <position position="160"/>
    </location>
    <ligand>
        <name>Mg(2+)</name>
        <dbReference type="ChEBI" id="CHEBI:18420"/>
        <label>1</label>
    </ligand>
</feature>
<feature type="binding site" evidence="1">
    <location>
        <position position="179"/>
    </location>
    <ligand>
        <name>Mg(2+)</name>
        <dbReference type="ChEBI" id="CHEBI:18420"/>
        <label>2</label>
    </ligand>
</feature>
<feature type="binding site" evidence="1">
    <location>
        <position position="181"/>
    </location>
    <ligand>
        <name>Mg(2+)</name>
        <dbReference type="ChEBI" id="CHEBI:18420"/>
        <label>2</label>
    </ligand>
</feature>
<feature type="binding site" evidence="1">
    <location>
        <position position="231"/>
    </location>
    <ligand>
        <name>DNA</name>
        <dbReference type="ChEBI" id="CHEBI:16991"/>
    </ligand>
</feature>
<feature type="binding site" evidence="1">
    <location>
        <position position="233"/>
    </location>
    <ligand>
        <name>DNA</name>
        <dbReference type="ChEBI" id="CHEBI:16991"/>
    </ligand>
</feature>
<feature type="binding site" evidence="1">
    <location>
        <position position="233"/>
    </location>
    <ligand>
        <name>Mg(2+)</name>
        <dbReference type="ChEBI" id="CHEBI:18420"/>
        <label>2</label>
    </ligand>
</feature>